<comment type="function">
    <text evidence="1">This is one of the proteins that bind and probably mediate the attachment of the 5S RNA into the large ribosomal subunit, where it forms part of the central protuberance.</text>
</comment>
<comment type="subunit">
    <text evidence="1">Part of the 50S ribosomal subunit; part of the 5S rRNA/L5/L18/L25 subcomplex. Contacts the 5S and 23S rRNAs.</text>
</comment>
<comment type="similarity">
    <text evidence="1">Belongs to the universal ribosomal protein uL18 family.</text>
</comment>
<sequence>MLRKCSDKQRKRMKRKVHIRKRVYGTAVRPRMTVFRSNRNISVQVIDDDARSTLASVSTLEKDFVLLRANVSSGLQIGEEIGRRLLEKHIDTVIFDRNGYLYHGVVAAVADGARKAGVKF</sequence>
<dbReference type="EMBL" id="AE000520">
    <property type="protein sequence ID" value="AAC65189.1"/>
    <property type="molecule type" value="Genomic_DNA"/>
</dbReference>
<dbReference type="PIR" id="G71356">
    <property type="entry name" value="G71356"/>
</dbReference>
<dbReference type="RefSeq" id="WP_010881652.1">
    <property type="nucleotide sequence ID" value="NC_021490.2"/>
</dbReference>
<dbReference type="SMR" id="O83235"/>
<dbReference type="STRING" id="243276.TP_0205"/>
<dbReference type="EnsemblBacteria" id="AAC65189">
    <property type="protein sequence ID" value="AAC65189"/>
    <property type="gene ID" value="TP_0205"/>
</dbReference>
<dbReference type="GeneID" id="93875992"/>
<dbReference type="KEGG" id="tpa:TP_0205"/>
<dbReference type="KEGG" id="tpw:TPANIC_0205"/>
<dbReference type="eggNOG" id="COG0256">
    <property type="taxonomic scope" value="Bacteria"/>
</dbReference>
<dbReference type="HOGENOM" id="CLU_098841_0_1_12"/>
<dbReference type="OrthoDB" id="9810939at2"/>
<dbReference type="Proteomes" id="UP000000811">
    <property type="component" value="Chromosome"/>
</dbReference>
<dbReference type="GO" id="GO:0022625">
    <property type="term" value="C:cytosolic large ribosomal subunit"/>
    <property type="evidence" value="ECO:0007669"/>
    <property type="project" value="TreeGrafter"/>
</dbReference>
<dbReference type="GO" id="GO:0008097">
    <property type="term" value="F:5S rRNA binding"/>
    <property type="evidence" value="ECO:0007669"/>
    <property type="project" value="TreeGrafter"/>
</dbReference>
<dbReference type="GO" id="GO:0003735">
    <property type="term" value="F:structural constituent of ribosome"/>
    <property type="evidence" value="ECO:0007669"/>
    <property type="project" value="InterPro"/>
</dbReference>
<dbReference type="GO" id="GO:0006412">
    <property type="term" value="P:translation"/>
    <property type="evidence" value="ECO:0007669"/>
    <property type="project" value="UniProtKB-UniRule"/>
</dbReference>
<dbReference type="CDD" id="cd00432">
    <property type="entry name" value="Ribosomal_L18_L5e"/>
    <property type="match status" value="1"/>
</dbReference>
<dbReference type="FunFam" id="3.30.420.100:FF:000001">
    <property type="entry name" value="50S ribosomal protein L18"/>
    <property type="match status" value="1"/>
</dbReference>
<dbReference type="Gene3D" id="3.30.420.100">
    <property type="match status" value="1"/>
</dbReference>
<dbReference type="HAMAP" id="MF_01337_B">
    <property type="entry name" value="Ribosomal_uL18_B"/>
    <property type="match status" value="1"/>
</dbReference>
<dbReference type="InterPro" id="IPR004389">
    <property type="entry name" value="Ribosomal_uL18_bac-type"/>
</dbReference>
<dbReference type="InterPro" id="IPR005484">
    <property type="entry name" value="Ribosomal_uL18_bac/euk"/>
</dbReference>
<dbReference type="NCBIfam" id="TIGR00060">
    <property type="entry name" value="L18_bact"/>
    <property type="match status" value="1"/>
</dbReference>
<dbReference type="PANTHER" id="PTHR12899">
    <property type="entry name" value="39S RIBOSOMAL PROTEIN L18, MITOCHONDRIAL"/>
    <property type="match status" value="1"/>
</dbReference>
<dbReference type="PANTHER" id="PTHR12899:SF3">
    <property type="entry name" value="LARGE RIBOSOMAL SUBUNIT PROTEIN UL18M"/>
    <property type="match status" value="1"/>
</dbReference>
<dbReference type="Pfam" id="PF00861">
    <property type="entry name" value="Ribosomal_L18p"/>
    <property type="match status" value="1"/>
</dbReference>
<dbReference type="SUPFAM" id="SSF53137">
    <property type="entry name" value="Translational machinery components"/>
    <property type="match status" value="1"/>
</dbReference>
<accession>O83235</accession>
<gene>
    <name evidence="1" type="primary">rplR</name>
    <name type="ordered locus">TP_0205</name>
</gene>
<proteinExistence type="inferred from homology"/>
<reference key="1">
    <citation type="journal article" date="1998" name="Science">
        <title>Complete genome sequence of Treponema pallidum, the syphilis spirochete.</title>
        <authorList>
            <person name="Fraser C.M."/>
            <person name="Norris S.J."/>
            <person name="Weinstock G.M."/>
            <person name="White O."/>
            <person name="Sutton G.G."/>
            <person name="Dodson R.J."/>
            <person name="Gwinn M.L."/>
            <person name="Hickey E.K."/>
            <person name="Clayton R.A."/>
            <person name="Ketchum K.A."/>
            <person name="Sodergren E."/>
            <person name="Hardham J.M."/>
            <person name="McLeod M.P."/>
            <person name="Salzberg S.L."/>
            <person name="Peterson J.D."/>
            <person name="Khalak H.G."/>
            <person name="Richardson D.L."/>
            <person name="Howell J.K."/>
            <person name="Chidambaram M."/>
            <person name="Utterback T.R."/>
            <person name="McDonald L.A."/>
            <person name="Artiach P."/>
            <person name="Bowman C."/>
            <person name="Cotton M.D."/>
            <person name="Fujii C."/>
            <person name="Garland S.A."/>
            <person name="Hatch B."/>
            <person name="Horst K."/>
            <person name="Roberts K.M."/>
            <person name="Sandusky M."/>
            <person name="Weidman J.F."/>
            <person name="Smith H.O."/>
            <person name="Venter J.C."/>
        </authorList>
    </citation>
    <scope>NUCLEOTIDE SEQUENCE [LARGE SCALE GENOMIC DNA]</scope>
    <source>
        <strain>Nichols</strain>
    </source>
</reference>
<evidence type="ECO:0000255" key="1">
    <source>
        <dbReference type="HAMAP-Rule" id="MF_01337"/>
    </source>
</evidence>
<evidence type="ECO:0000305" key="2"/>
<feature type="chain" id="PRO_0000131376" description="Large ribosomal subunit protein uL18">
    <location>
        <begin position="1"/>
        <end position="120"/>
    </location>
</feature>
<protein>
    <recommendedName>
        <fullName evidence="1">Large ribosomal subunit protein uL18</fullName>
    </recommendedName>
    <alternativeName>
        <fullName evidence="2">50S ribosomal protein L18</fullName>
    </alternativeName>
</protein>
<keyword id="KW-1185">Reference proteome</keyword>
<keyword id="KW-0687">Ribonucleoprotein</keyword>
<keyword id="KW-0689">Ribosomal protein</keyword>
<keyword id="KW-0694">RNA-binding</keyword>
<keyword id="KW-0699">rRNA-binding</keyword>
<organism>
    <name type="scientific">Treponema pallidum (strain Nichols)</name>
    <dbReference type="NCBI Taxonomy" id="243276"/>
    <lineage>
        <taxon>Bacteria</taxon>
        <taxon>Pseudomonadati</taxon>
        <taxon>Spirochaetota</taxon>
        <taxon>Spirochaetia</taxon>
        <taxon>Spirochaetales</taxon>
        <taxon>Treponemataceae</taxon>
        <taxon>Treponema</taxon>
    </lineage>
</organism>
<name>RL18_TREPA</name>